<sequence>MPFSNSHNTLKLRFPAEDEFPDLSAHNNHMAKVLTPELYAELRAKSTPSGFTLDDVIQTGVDNPGHPYIMTVGCVAGDEESYDVFKELFDPIIEDRHGGYKPSDEHKTDLNPDNLQGGDDLDPNYVLSSRVRTGRSIRGFCLPPHCSRGERRAIEKLAVEALSSLDGDLAGRYYALKSMTEAEQQQLIDDHFLFDKPVSPLLLASGMARDWPDARGIWHNDNKTFLVWINEEDHLRVISMQKGGNMKEVFTRFCNGLTQIETLFKSKNYEFMWNPHLGYILTCPSNLGTGLRAGVHIKLPHLGKHEKFPEVLKRLRLQKRGTGGVDTAAVGGVFDVSNADRLGFSEVELVQMVVDGVKLLIEMEQRLEQGQAIDDLVPAQK</sequence>
<keyword id="KW-0067">ATP-binding</keyword>
<keyword id="KW-1003">Cell membrane</keyword>
<keyword id="KW-0963">Cytoplasm</keyword>
<keyword id="KW-0903">Direct protein sequencing</keyword>
<keyword id="KW-1017">Isopeptide bond</keyword>
<keyword id="KW-0418">Kinase</keyword>
<keyword id="KW-0472">Membrane</keyword>
<keyword id="KW-0496">Mitochondrion</keyword>
<keyword id="KW-0944">Nitration</keyword>
<keyword id="KW-0547">Nucleotide-binding</keyword>
<keyword id="KW-0597">Phosphoprotein</keyword>
<keyword id="KW-1185">Reference proteome</keyword>
<keyword id="KW-0808">Transferase</keyword>
<keyword id="KW-0832">Ubl conjugation</keyword>
<organism>
    <name type="scientific">Canis lupus familiaris</name>
    <name type="common">Dog</name>
    <name type="synonym">Canis familiaris</name>
    <dbReference type="NCBI Taxonomy" id="9615"/>
    <lineage>
        <taxon>Eukaryota</taxon>
        <taxon>Metazoa</taxon>
        <taxon>Chordata</taxon>
        <taxon>Craniata</taxon>
        <taxon>Vertebrata</taxon>
        <taxon>Euteleostomi</taxon>
        <taxon>Mammalia</taxon>
        <taxon>Eutheria</taxon>
        <taxon>Laurasiatheria</taxon>
        <taxon>Carnivora</taxon>
        <taxon>Caniformia</taxon>
        <taxon>Canidae</taxon>
        <taxon>Canis</taxon>
    </lineage>
</organism>
<proteinExistence type="evidence at protein level"/>
<comment type="function">
    <text evidence="2">Reversibly catalyzes the transfer of phosphate between ATP and various phosphogens (e.g. creatine phosphate). Creatine kinase isoenzymes play a central role in energy transduction in tissues with large, fluctuating energy demands, such as skeletal muscle, heart, brain and spermatozoa. Acts as a key regulator of adaptive thermogenesis as part of the futile creatine cycle: localizes to the mitochondria of thermogenic fat cells and acts by mediating phosphorylation of creatine to initiate a futile cycle of creatine phosphorylation and dephosphorylation. During the futile creatine cycle, creatine and N-phosphocreatine are in a futile cycle, which dissipates the high energy charge of N-phosphocreatine as heat without performing any mechanical or chemical work.</text>
</comment>
<comment type="catalytic activity">
    <reaction evidence="2 5">
        <text>creatine + ATP = N-phosphocreatine + ADP + H(+)</text>
        <dbReference type="Rhea" id="RHEA:17157"/>
        <dbReference type="ChEBI" id="CHEBI:15378"/>
        <dbReference type="ChEBI" id="CHEBI:30616"/>
        <dbReference type="ChEBI" id="CHEBI:57947"/>
        <dbReference type="ChEBI" id="CHEBI:58092"/>
        <dbReference type="ChEBI" id="CHEBI:456216"/>
        <dbReference type="EC" id="2.7.3.2"/>
    </reaction>
    <physiologicalReaction direction="left-to-right" evidence="2">
        <dbReference type="Rhea" id="RHEA:17158"/>
    </physiologicalReaction>
</comment>
<comment type="subunit">
    <text evidence="1">Dimer of identical or non-identical chains, which can be either B (brain type) or M (muscle type). With MM being the major form in skeletal muscle and myocardium, MB existing in myocardium, and BB existing in many tissues, especially brain. Interacts with SLC12A6 (via C-terminus); the interaction may be required for SLC12A6 potassium-chloride cotransport activity (By similarity).</text>
</comment>
<comment type="subcellular location">
    <subcellularLocation>
        <location evidence="2">Cytoplasm</location>
        <location evidence="2">Cytosol</location>
    </subcellularLocation>
    <subcellularLocation>
        <location evidence="2">Mitochondrion</location>
    </subcellularLocation>
    <subcellularLocation>
        <location evidence="1">Cell membrane</location>
    </subcellularLocation>
    <text evidence="2">Localizes to the mitochondria of thermogenic fat cells via the internal MTS-like signal (iMTS-L) region.</text>
</comment>
<comment type="domain">
    <text evidence="2">The internal MTS-like signal (iMTS-L) mediates targeting to mitochondria thermogenic fat cells.</text>
</comment>
<comment type="PTM">
    <text evidence="1">Ubiquitinated by the ECS(ASB9) complex, leading to its degradation by the proteasome.</text>
</comment>
<comment type="similarity">
    <text evidence="3 4">Belongs to the ATP:guanido phosphotransferase family.</text>
</comment>
<protein>
    <recommendedName>
        <fullName>Creatine kinase B-type</fullName>
        <ecNumber>2.7.3.2</ecNumber>
    </recommendedName>
    <alternativeName>
        <fullName>B-CK</fullName>
    </alternativeName>
    <alternativeName>
        <fullName>Creatine kinase B chain</fullName>
    </alternativeName>
    <alternativeName>
        <fullName>Creatine phosphokinase M-type</fullName>
        <shortName>CPK-B</shortName>
    </alternativeName>
</protein>
<feature type="initiator methionine" description="Removed" evidence="1">
    <location>
        <position position="1"/>
    </location>
</feature>
<feature type="chain" id="PRO_0000211965" description="Creatine kinase B-type">
    <location>
        <begin position="2"/>
        <end position="381"/>
    </location>
</feature>
<feature type="domain" description="Phosphagen kinase N-terminal" evidence="3">
    <location>
        <begin position="11"/>
        <end position="98"/>
    </location>
</feature>
<feature type="domain" description="Phosphagen kinase C-terminal" evidence="4">
    <location>
        <begin position="125"/>
        <end position="367"/>
    </location>
</feature>
<feature type="region of interest" description="Disordered" evidence="6">
    <location>
        <begin position="96"/>
        <end position="123"/>
    </location>
</feature>
<feature type="region of interest" description="Internal MTS-like signal" evidence="2">
    <location>
        <begin position="130"/>
        <end position="138"/>
    </location>
</feature>
<feature type="compositionally biased region" description="Basic and acidic residues" evidence="6">
    <location>
        <begin position="96"/>
        <end position="110"/>
    </location>
</feature>
<feature type="binding site" evidence="1">
    <location>
        <position position="72"/>
    </location>
    <ligand>
        <name>creatine</name>
        <dbReference type="ChEBI" id="CHEBI:57947"/>
    </ligand>
</feature>
<feature type="binding site" evidence="4">
    <location>
        <begin position="128"/>
        <end position="132"/>
    </location>
    <ligand>
        <name>ATP</name>
        <dbReference type="ChEBI" id="CHEBI:30616"/>
    </ligand>
</feature>
<feature type="binding site" evidence="4">
    <location>
        <position position="130"/>
    </location>
    <ligand>
        <name>ATP</name>
        <dbReference type="ChEBI" id="CHEBI:30616"/>
    </ligand>
</feature>
<feature type="binding site" evidence="4">
    <location>
        <position position="132"/>
    </location>
    <ligand>
        <name>ATP</name>
        <dbReference type="ChEBI" id="CHEBI:30616"/>
    </ligand>
</feature>
<feature type="binding site" evidence="4">
    <location>
        <position position="191"/>
    </location>
    <ligand>
        <name>ATP</name>
        <dbReference type="ChEBI" id="CHEBI:30616"/>
    </ligand>
</feature>
<feature type="binding site" evidence="1">
    <location>
        <position position="232"/>
    </location>
    <ligand>
        <name>creatine</name>
        <dbReference type="ChEBI" id="CHEBI:57947"/>
    </ligand>
</feature>
<feature type="binding site" evidence="4">
    <location>
        <position position="236"/>
    </location>
    <ligand>
        <name>ATP</name>
        <dbReference type="ChEBI" id="CHEBI:30616"/>
    </ligand>
</feature>
<feature type="binding site" evidence="1">
    <location>
        <position position="285"/>
    </location>
    <ligand>
        <name>creatine</name>
        <dbReference type="ChEBI" id="CHEBI:57947"/>
    </ligand>
</feature>
<feature type="binding site" evidence="4">
    <location>
        <position position="292"/>
    </location>
    <ligand>
        <name>ATP</name>
        <dbReference type="ChEBI" id="CHEBI:30616"/>
    </ligand>
</feature>
<feature type="binding site" evidence="4">
    <location>
        <begin position="320"/>
        <end position="325"/>
    </location>
    <ligand>
        <name>ATP</name>
        <dbReference type="ChEBI" id="CHEBI:30616"/>
    </ligand>
</feature>
<feature type="binding site" evidence="4">
    <location>
        <position position="320"/>
    </location>
    <ligand>
        <name>ATP</name>
        <dbReference type="ChEBI" id="CHEBI:30616"/>
    </ligand>
</feature>
<feature type="binding site" evidence="4">
    <location>
        <position position="335"/>
    </location>
    <ligand>
        <name>ATP</name>
        <dbReference type="ChEBI" id="CHEBI:30616"/>
    </ligand>
</feature>
<feature type="modified residue" description="Phosphoserine" evidence="1">
    <location>
        <position position="4"/>
    </location>
</feature>
<feature type="modified residue" description="Phosphothreonine" evidence="1">
    <location>
        <position position="35"/>
    </location>
</feature>
<feature type="modified residue" description="Phosphotyrosine" evidence="2">
    <location>
        <position position="125"/>
    </location>
</feature>
<feature type="modified residue" description="Phosphoserine" evidence="1">
    <location>
        <position position="199"/>
    </location>
</feature>
<feature type="modified residue" description="3'-nitrotyrosine" evidence="2">
    <location>
        <position position="269"/>
    </location>
</feature>
<feature type="modified residue" description="Phosphothreonine" evidence="2">
    <location>
        <position position="322"/>
    </location>
</feature>
<feature type="cross-link" description="Glycyl lysine isopeptide (Lys-Gly) (interchain with G-Cter in ubiquitin)" evidence="1">
    <location>
        <position position="45"/>
    </location>
</feature>
<feature type="cross-link" description="Glycyl lysine isopeptide (Lys-Gly) (interchain with G-Cter in ubiquitin)" evidence="1">
    <location>
        <position position="101"/>
    </location>
</feature>
<feature type="cross-link" description="Glycyl lysine isopeptide (Lys-Gly) (interchain with G-Cter in ubiquitin)" evidence="1">
    <location>
        <position position="107"/>
    </location>
</feature>
<feature type="cross-link" description="Glycyl lysine isopeptide (Lys-Gly) (interchain with G-Cter in ubiquitin)" evidence="1">
    <location>
        <position position="381"/>
    </location>
</feature>
<name>KCRB_CANLF</name>
<accession>P05124</accession>
<evidence type="ECO:0000250" key="1">
    <source>
        <dbReference type="UniProtKB" id="P12277"/>
    </source>
</evidence>
<evidence type="ECO:0000250" key="2">
    <source>
        <dbReference type="UniProtKB" id="Q04447"/>
    </source>
</evidence>
<evidence type="ECO:0000255" key="3">
    <source>
        <dbReference type="PROSITE-ProRule" id="PRU00842"/>
    </source>
</evidence>
<evidence type="ECO:0000255" key="4">
    <source>
        <dbReference type="PROSITE-ProRule" id="PRU00843"/>
    </source>
</evidence>
<evidence type="ECO:0000255" key="5">
    <source>
        <dbReference type="PROSITE-ProRule" id="PRU10029"/>
    </source>
</evidence>
<evidence type="ECO:0000256" key="6">
    <source>
        <dbReference type="SAM" id="MobiDB-lite"/>
    </source>
</evidence>
<reference key="1">
    <citation type="journal article" date="1986" name="Biochem. Biophys. Res. Commun.">
        <title>The complete nucleotide sequence of canine brain B creatine kinase mRNA: homology in the coding and 3' noncoding regions among species.</title>
        <authorList>
            <person name="Billadello J.J."/>
            <person name="Kelly D.P."/>
            <person name="Roman D.G."/>
            <person name="Strauss A.W."/>
        </authorList>
    </citation>
    <scope>NUCLEOTIDE SEQUENCE [MRNA]</scope>
    <source>
        <tissue>Brain</tissue>
    </source>
</reference>
<reference key="2">
    <citation type="journal article" date="1985" name="Proc. Natl. Acad. Sci. U.S.A.">
        <title>Complete nucleotide sequence of dog heart creatine kinase mRNA: conservation of amino acid sequence within and among species.</title>
        <authorList>
            <person name="Roman D.G."/>
            <person name="Billadello J.J."/>
            <person name="Gordon J."/>
            <person name="Grace A."/>
            <person name="Sobel B."/>
            <person name="Strauss A.W."/>
        </authorList>
    </citation>
    <scope>PROTEIN SEQUENCE OF 2-30; 44-61; 87-95; 138-149; 158-171; 178-208; 224-236; 247-261; 268-287; 321-357 AND 364-381</scope>
    <source>
        <tissue>Brain</tissue>
    </source>
</reference>
<dbReference type="EC" id="2.7.3.2"/>
<dbReference type="EMBL" id="M13453">
    <property type="protein sequence ID" value="AAA30837.1"/>
    <property type="molecule type" value="mRNA"/>
</dbReference>
<dbReference type="PIR" id="A24227">
    <property type="entry name" value="B24686"/>
</dbReference>
<dbReference type="SMR" id="P05124"/>
<dbReference type="FunCoup" id="P05124">
    <property type="interactions" value="88"/>
</dbReference>
<dbReference type="STRING" id="9615.ENSCAFP00000061954"/>
<dbReference type="PaxDb" id="9612-ENSCAFP00000026998"/>
<dbReference type="Ensembl" id="ENSCAFT00000029035.5">
    <property type="protein sequence ID" value="ENSCAFP00000026998.3"/>
    <property type="gene ID" value="ENSCAFG00000018277.5"/>
</dbReference>
<dbReference type="Ensembl" id="ENSCAFT00030002059.1">
    <property type="protein sequence ID" value="ENSCAFP00030001822.1"/>
    <property type="gene ID" value="ENSCAFG00030001161.1"/>
</dbReference>
<dbReference type="Ensembl" id="ENSCAFT00845033496.1">
    <property type="protein sequence ID" value="ENSCAFP00845026222.1"/>
    <property type="gene ID" value="ENSCAFG00845018958.1"/>
</dbReference>
<dbReference type="GeneID" id="100855552"/>
<dbReference type="KEGG" id="cfa:100855552"/>
<dbReference type="VEuPathDB" id="HostDB:ENSCAFG00845018958"/>
<dbReference type="eggNOG" id="KOG3581">
    <property type="taxonomic scope" value="Eukaryota"/>
</dbReference>
<dbReference type="GeneTree" id="ENSGT00950000182772"/>
<dbReference type="HOGENOM" id="CLU_019868_4_2_1"/>
<dbReference type="InParanoid" id="P05124"/>
<dbReference type="OMA" id="HMRVIAM"/>
<dbReference type="OrthoDB" id="430219at2759"/>
<dbReference type="TreeFam" id="TF314214"/>
<dbReference type="Reactome" id="R-CFA-71288">
    <property type="pathway name" value="Creatine metabolism"/>
</dbReference>
<dbReference type="Reactome" id="R-CFA-9696264">
    <property type="pathway name" value="RND3 GTPase cycle"/>
</dbReference>
<dbReference type="Proteomes" id="UP000002254">
    <property type="component" value="Chromosome 8"/>
</dbReference>
<dbReference type="Proteomes" id="UP000694429">
    <property type="component" value="Chromosome 8"/>
</dbReference>
<dbReference type="Proteomes" id="UP000694542">
    <property type="component" value="Unplaced"/>
</dbReference>
<dbReference type="Proteomes" id="UP000805418">
    <property type="component" value="Chromosome 8"/>
</dbReference>
<dbReference type="Bgee" id="ENSCAFG00000018277">
    <property type="expression patterns" value="Expressed in olfactory bulb and 47 other cell types or tissues"/>
</dbReference>
<dbReference type="GO" id="GO:0005829">
    <property type="term" value="C:cytosol"/>
    <property type="evidence" value="ECO:0007669"/>
    <property type="project" value="UniProtKB-SubCell"/>
</dbReference>
<dbReference type="GO" id="GO:0005615">
    <property type="term" value="C:extracellular space"/>
    <property type="evidence" value="ECO:0000250"/>
    <property type="project" value="AgBase"/>
</dbReference>
<dbReference type="GO" id="GO:0005739">
    <property type="term" value="C:mitochondrion"/>
    <property type="evidence" value="ECO:0000250"/>
    <property type="project" value="UniProtKB"/>
</dbReference>
<dbReference type="GO" id="GO:0005886">
    <property type="term" value="C:plasma membrane"/>
    <property type="evidence" value="ECO:0007669"/>
    <property type="project" value="UniProtKB-SubCell"/>
</dbReference>
<dbReference type="GO" id="GO:0005524">
    <property type="term" value="F:ATP binding"/>
    <property type="evidence" value="ECO:0007669"/>
    <property type="project" value="UniProtKB-KW"/>
</dbReference>
<dbReference type="GO" id="GO:0004111">
    <property type="term" value="F:creatine kinase activity"/>
    <property type="evidence" value="ECO:0000250"/>
    <property type="project" value="UniProtKB"/>
</dbReference>
<dbReference type="GO" id="GO:0007420">
    <property type="term" value="P:brain development"/>
    <property type="evidence" value="ECO:0000250"/>
    <property type="project" value="AgBase"/>
</dbReference>
<dbReference type="GO" id="GO:0030644">
    <property type="term" value="P:intracellular chloride ion homeostasis"/>
    <property type="evidence" value="ECO:0000250"/>
    <property type="project" value="AgBase"/>
</dbReference>
<dbReference type="GO" id="GO:0046314">
    <property type="term" value="P:phosphocreatine biosynthetic process"/>
    <property type="evidence" value="ECO:0000318"/>
    <property type="project" value="GO_Central"/>
</dbReference>
<dbReference type="CDD" id="cd00716">
    <property type="entry name" value="creatine_kinase_like"/>
    <property type="match status" value="1"/>
</dbReference>
<dbReference type="FunFam" id="3.30.590.10:FF:000026">
    <property type="entry name" value="Creatine kinase B-type"/>
    <property type="match status" value="1"/>
</dbReference>
<dbReference type="FunFam" id="1.10.135.10:FF:000001">
    <property type="entry name" value="Creatine kinase M-type"/>
    <property type="match status" value="1"/>
</dbReference>
<dbReference type="Gene3D" id="1.10.135.10">
    <property type="entry name" value="ATP:guanido phosphotransferase, N-terminal domain"/>
    <property type="match status" value="1"/>
</dbReference>
<dbReference type="Gene3D" id="3.30.590.10">
    <property type="entry name" value="Glutamine synthetase/guanido kinase, catalytic domain"/>
    <property type="match status" value="1"/>
</dbReference>
<dbReference type="InterPro" id="IPR000749">
    <property type="entry name" value="ATP-guanido_PTrfase"/>
</dbReference>
<dbReference type="InterPro" id="IPR022415">
    <property type="entry name" value="ATP-guanido_PTrfase_AS"/>
</dbReference>
<dbReference type="InterPro" id="IPR022414">
    <property type="entry name" value="ATP-guanido_PTrfase_cat"/>
</dbReference>
<dbReference type="InterPro" id="IPR022413">
    <property type="entry name" value="ATP-guanido_PTrfase_N"/>
</dbReference>
<dbReference type="InterPro" id="IPR036802">
    <property type="entry name" value="ATP-guanido_PTrfase_N_sf"/>
</dbReference>
<dbReference type="InterPro" id="IPR014746">
    <property type="entry name" value="Gln_synth/guanido_kin_cat_dom"/>
</dbReference>
<dbReference type="PANTHER" id="PTHR11547">
    <property type="entry name" value="ARGININE OR CREATINE KINASE"/>
    <property type="match status" value="1"/>
</dbReference>
<dbReference type="PANTHER" id="PTHR11547:SF23">
    <property type="entry name" value="CREATINE KINASE B-TYPE"/>
    <property type="match status" value="1"/>
</dbReference>
<dbReference type="Pfam" id="PF00217">
    <property type="entry name" value="ATP-gua_Ptrans"/>
    <property type="match status" value="1"/>
</dbReference>
<dbReference type="Pfam" id="PF02807">
    <property type="entry name" value="ATP-gua_PtransN"/>
    <property type="match status" value="1"/>
</dbReference>
<dbReference type="SUPFAM" id="SSF55931">
    <property type="entry name" value="Glutamine synthetase/guanido kinase"/>
    <property type="match status" value="1"/>
</dbReference>
<dbReference type="SUPFAM" id="SSF48034">
    <property type="entry name" value="Guanido kinase N-terminal domain"/>
    <property type="match status" value="1"/>
</dbReference>
<dbReference type="PROSITE" id="PS00112">
    <property type="entry name" value="PHOSPHAGEN_KINASE"/>
    <property type="match status" value="1"/>
</dbReference>
<dbReference type="PROSITE" id="PS51510">
    <property type="entry name" value="PHOSPHAGEN_KINASE_C"/>
    <property type="match status" value="1"/>
</dbReference>
<dbReference type="PROSITE" id="PS51509">
    <property type="entry name" value="PHOSPHAGEN_KINASE_N"/>
    <property type="match status" value="1"/>
</dbReference>
<gene>
    <name type="primary">CKB</name>
</gene>